<proteinExistence type="evidence at protein level"/>
<feature type="chain" id="PRO_0000361779" description="Protein pelota homolog">
    <location>
        <begin position="1"/>
        <end position="356"/>
    </location>
</feature>
<feature type="strand" evidence="2">
    <location>
        <begin position="2"/>
        <end position="5"/>
    </location>
</feature>
<feature type="strand" evidence="2">
    <location>
        <begin position="12"/>
        <end position="16"/>
    </location>
</feature>
<feature type="helix" evidence="2">
    <location>
        <begin position="20"/>
        <end position="29"/>
    </location>
</feature>
<feature type="strand" evidence="2">
    <location>
        <begin position="35"/>
        <end position="44"/>
    </location>
</feature>
<feature type="strand" evidence="2">
    <location>
        <begin position="47"/>
        <end position="49"/>
    </location>
</feature>
<feature type="strand" evidence="2">
    <location>
        <begin position="52"/>
        <end position="67"/>
    </location>
</feature>
<feature type="strand" evidence="2">
    <location>
        <begin position="73"/>
        <end position="82"/>
    </location>
</feature>
<feature type="helix" evidence="2">
    <location>
        <begin position="85"/>
        <end position="87"/>
    </location>
</feature>
<feature type="strand" evidence="2">
    <location>
        <begin position="92"/>
        <end position="99"/>
    </location>
</feature>
<feature type="strand" evidence="2">
    <location>
        <begin position="104"/>
        <end position="107"/>
    </location>
</feature>
<feature type="helix" evidence="2">
    <location>
        <begin position="114"/>
        <end position="122"/>
    </location>
</feature>
<feature type="strand" evidence="2">
    <location>
        <begin position="128"/>
        <end position="134"/>
    </location>
</feature>
<feature type="strand" evidence="2">
    <location>
        <begin position="136"/>
        <end position="145"/>
    </location>
</feature>
<feature type="strand" evidence="2">
    <location>
        <begin position="148"/>
        <end position="156"/>
    </location>
</feature>
<feature type="helix" evidence="2">
    <location>
        <begin position="167"/>
        <end position="189"/>
    </location>
</feature>
<feature type="strand" evidence="2">
    <location>
        <begin position="192"/>
        <end position="199"/>
    </location>
</feature>
<feature type="helix" evidence="2">
    <location>
        <begin position="202"/>
        <end position="213"/>
    </location>
</feature>
<feature type="strand" evidence="2">
    <location>
        <begin position="217"/>
        <end position="223"/>
    </location>
</feature>
<feature type="helix" evidence="2">
    <location>
        <begin position="228"/>
        <end position="235"/>
    </location>
</feature>
<feature type="helix" evidence="2">
    <location>
        <begin position="239"/>
        <end position="244"/>
    </location>
</feature>
<feature type="turn" evidence="2">
    <location>
        <begin position="245"/>
        <end position="247"/>
    </location>
</feature>
<feature type="helix" evidence="2">
    <location>
        <begin position="249"/>
        <end position="266"/>
    </location>
</feature>
<feature type="helix" evidence="2">
    <location>
        <begin position="268"/>
        <end position="270"/>
    </location>
</feature>
<feature type="strand" evidence="2">
    <location>
        <begin position="271"/>
        <end position="274"/>
    </location>
</feature>
<feature type="helix" evidence="2">
    <location>
        <begin position="275"/>
        <end position="284"/>
    </location>
</feature>
<feature type="strand" evidence="2">
    <location>
        <begin position="287"/>
        <end position="293"/>
    </location>
</feature>
<feature type="helix" evidence="2">
    <location>
        <begin position="294"/>
        <end position="298"/>
    </location>
</feature>
<feature type="helix" evidence="2">
    <location>
        <begin position="302"/>
        <end position="317"/>
    </location>
</feature>
<feature type="strand" evidence="2">
    <location>
        <begin position="321"/>
        <end position="325"/>
    </location>
</feature>
<feature type="strand" evidence="2">
    <location>
        <begin position="327"/>
        <end position="329"/>
    </location>
</feature>
<feature type="helix" evidence="2">
    <location>
        <begin position="330"/>
        <end position="335"/>
    </location>
</feature>
<feature type="helix" evidence="2">
    <location>
        <begin position="336"/>
        <end position="338"/>
    </location>
</feature>
<feature type="strand" evidence="2">
    <location>
        <begin position="341"/>
        <end position="347"/>
    </location>
</feature>
<feature type="helix" evidence="2">
    <location>
        <begin position="351"/>
        <end position="353"/>
    </location>
</feature>
<organism>
    <name type="scientific">Aeropyrum pernix (strain ATCC 700893 / DSM 11879 / JCM 9820 / NBRC 100138 / K1)</name>
    <dbReference type="NCBI Taxonomy" id="272557"/>
    <lineage>
        <taxon>Archaea</taxon>
        <taxon>Thermoproteota</taxon>
        <taxon>Thermoprotei</taxon>
        <taxon>Desulfurococcales</taxon>
        <taxon>Desulfurococcaceae</taxon>
        <taxon>Aeropyrum</taxon>
    </lineage>
</organism>
<accession>Q9YAZ5</accession>
<evidence type="ECO:0000255" key="1">
    <source>
        <dbReference type="HAMAP-Rule" id="MF_01853"/>
    </source>
</evidence>
<evidence type="ECO:0007829" key="2">
    <source>
        <dbReference type="PDB" id="3WXM"/>
    </source>
</evidence>
<dbReference type="EC" id="3.1.-.-" evidence="1"/>
<dbReference type="EMBL" id="BA000002">
    <property type="protein sequence ID" value="BAA80803.2"/>
    <property type="molecule type" value="Genomic_DNA"/>
</dbReference>
<dbReference type="PIR" id="F72564">
    <property type="entry name" value="F72564"/>
</dbReference>
<dbReference type="RefSeq" id="WP_010866603.1">
    <property type="nucleotide sequence ID" value="NC_000854.2"/>
</dbReference>
<dbReference type="PDB" id="3WXM">
    <property type="method" value="X-ray"/>
    <property type="resolution" value="2.30 A"/>
    <property type="chains" value="B/D/F/H=1-356"/>
</dbReference>
<dbReference type="PDB" id="6JI2">
    <property type="method" value="X-ray"/>
    <property type="resolution" value="3.00 A"/>
    <property type="chains" value="B/F=1-356"/>
</dbReference>
<dbReference type="PDBsum" id="3WXM"/>
<dbReference type="PDBsum" id="6JI2"/>
<dbReference type="SMR" id="Q9YAZ5"/>
<dbReference type="DIP" id="DIP-59400N"/>
<dbReference type="IntAct" id="Q9YAZ5">
    <property type="interactions" value="1"/>
</dbReference>
<dbReference type="STRING" id="272557.APE_1800.1"/>
<dbReference type="EnsemblBacteria" id="BAA80803">
    <property type="protein sequence ID" value="BAA80803"/>
    <property type="gene ID" value="APE_1800.1"/>
</dbReference>
<dbReference type="GeneID" id="1446249"/>
<dbReference type="KEGG" id="ape:APE_1800.1"/>
<dbReference type="eggNOG" id="arCOG01741">
    <property type="taxonomic scope" value="Archaea"/>
</dbReference>
<dbReference type="EvolutionaryTrace" id="Q9YAZ5"/>
<dbReference type="Proteomes" id="UP000002518">
    <property type="component" value="Chromosome"/>
</dbReference>
<dbReference type="GO" id="GO:0005737">
    <property type="term" value="C:cytoplasm"/>
    <property type="evidence" value="ECO:0007669"/>
    <property type="project" value="UniProtKB-SubCell"/>
</dbReference>
<dbReference type="GO" id="GO:0004519">
    <property type="term" value="F:endonuclease activity"/>
    <property type="evidence" value="ECO:0007669"/>
    <property type="project" value="UniProtKB-UniRule"/>
</dbReference>
<dbReference type="GO" id="GO:0046872">
    <property type="term" value="F:metal ion binding"/>
    <property type="evidence" value="ECO:0007669"/>
    <property type="project" value="UniProtKB-UniRule"/>
</dbReference>
<dbReference type="GO" id="GO:0070651">
    <property type="term" value="P:nonfunctional rRNA decay"/>
    <property type="evidence" value="ECO:0007669"/>
    <property type="project" value="TreeGrafter"/>
</dbReference>
<dbReference type="GO" id="GO:0070966">
    <property type="term" value="P:nuclear-transcribed mRNA catabolic process, no-go decay"/>
    <property type="evidence" value="ECO:0007669"/>
    <property type="project" value="InterPro"/>
</dbReference>
<dbReference type="GO" id="GO:0070481">
    <property type="term" value="P:nuclear-transcribed mRNA catabolic process, non-stop decay"/>
    <property type="evidence" value="ECO:0007669"/>
    <property type="project" value="InterPro"/>
</dbReference>
<dbReference type="GO" id="GO:0032790">
    <property type="term" value="P:ribosome disassembly"/>
    <property type="evidence" value="ECO:0007669"/>
    <property type="project" value="TreeGrafter"/>
</dbReference>
<dbReference type="GO" id="GO:0071025">
    <property type="term" value="P:RNA surveillance"/>
    <property type="evidence" value="ECO:0007669"/>
    <property type="project" value="InterPro"/>
</dbReference>
<dbReference type="Gene3D" id="3.30.1330.30">
    <property type="match status" value="1"/>
</dbReference>
<dbReference type="Gene3D" id="3.30.420.60">
    <property type="entry name" value="eRF1 domain 2"/>
    <property type="match status" value="1"/>
</dbReference>
<dbReference type="Gene3D" id="2.30.30.870">
    <property type="entry name" value="Pelota, domain A"/>
    <property type="match status" value="1"/>
</dbReference>
<dbReference type="HAMAP" id="MF_01853">
    <property type="entry name" value="PelO"/>
    <property type="match status" value="1"/>
</dbReference>
<dbReference type="InterPro" id="IPR042226">
    <property type="entry name" value="eFR1_2_sf"/>
</dbReference>
<dbReference type="InterPro" id="IPR005140">
    <property type="entry name" value="eRF1_1_Pelota"/>
</dbReference>
<dbReference type="InterPro" id="IPR005142">
    <property type="entry name" value="eRF1_3"/>
</dbReference>
<dbReference type="InterPro" id="IPR038069">
    <property type="entry name" value="Pelota/DOM34_N"/>
</dbReference>
<dbReference type="InterPro" id="IPR023521">
    <property type="entry name" value="Pelota_arc"/>
</dbReference>
<dbReference type="InterPro" id="IPR029064">
    <property type="entry name" value="Ribosomal_eL30-like_sf"/>
</dbReference>
<dbReference type="InterPro" id="IPR004405">
    <property type="entry name" value="Transl-rel_pelota"/>
</dbReference>
<dbReference type="PANTHER" id="PTHR10853">
    <property type="entry name" value="PELOTA"/>
    <property type="match status" value="1"/>
</dbReference>
<dbReference type="PANTHER" id="PTHR10853:SF0">
    <property type="entry name" value="PROTEIN PELOTA HOMOLOG"/>
    <property type="match status" value="1"/>
</dbReference>
<dbReference type="Pfam" id="PF03463">
    <property type="entry name" value="eRF1_1"/>
    <property type="match status" value="1"/>
</dbReference>
<dbReference type="Pfam" id="PF03465">
    <property type="entry name" value="eRF1_3"/>
    <property type="match status" value="1"/>
</dbReference>
<dbReference type="SMART" id="SM01194">
    <property type="entry name" value="eRF1_1"/>
    <property type="match status" value="1"/>
</dbReference>
<dbReference type="SUPFAM" id="SSF159065">
    <property type="entry name" value="Dom34/Pelota N-terminal domain-like"/>
    <property type="match status" value="1"/>
</dbReference>
<dbReference type="SUPFAM" id="SSF55315">
    <property type="entry name" value="L30e-like"/>
    <property type="match status" value="1"/>
</dbReference>
<dbReference type="SUPFAM" id="SSF53137">
    <property type="entry name" value="Translational machinery components"/>
    <property type="match status" value="1"/>
</dbReference>
<gene>
    <name evidence="1" type="primary">pelA</name>
    <name type="ordered locus">APE_1800.1</name>
</gene>
<name>PELO_AERPE</name>
<sequence length="356" mass="39238">MRVEVLDNKRRIVRLRPESEEDLWLLRITLRPGDVVRIRTSRDVPVGSGRKERVVMTLRIRLDSIEFQPFTGKLRISGIVVEGPDEFGVKGRRHSTAVSIGTWLVVERDKGWSEQELERLASGRARGTAVIAAVDYDEFALAVLAGHGMKILEDTSARLPGKDDPSREQEVEKYVDRAAKRIVEEAARHRSPIAVIAGPGQLKTSVAEKVQRAMPSLKVATVDTSMGGVAGVREALRRESVTRILRELSIVEAEGVLEEFLRRIAKSRDTVAYTPGEVLAVARMGAVDTVLLVDTLLHSPDDAVREAVDEALRLVESMGGRVIIIPGDSPAGERLVSFGGVIALLRYPVPQEARRL</sequence>
<protein>
    <recommendedName>
        <fullName evidence="1">Protein pelota homolog</fullName>
        <ecNumber evidence="1">3.1.-.-</ecNumber>
    </recommendedName>
</protein>
<comment type="function">
    <text evidence="1">May function in recognizing stalled ribosomes, interact with stem-loop structures in stalled mRNA molecules, and effect endonucleolytic cleavage of the mRNA. May play a role in the release non-functional ribosomes and degradation of damaged mRNAs. Has endoribonuclease activity.</text>
</comment>
<comment type="cofactor">
    <cofactor evidence="1">
        <name>a divalent metal cation</name>
        <dbReference type="ChEBI" id="CHEBI:60240"/>
    </cofactor>
</comment>
<comment type="subunit">
    <text evidence="1">Monomer.</text>
</comment>
<comment type="interaction">
    <interactant intactId="EBI-15880754">
        <id>Q9YAZ5</id>
    </interactant>
    <interactant intactId="EBI-15880729">
        <id>Q9YAV0</id>
        <label>tuf</label>
    </interactant>
    <organismsDiffer>false</organismsDiffer>
    <experiments>3</experiments>
</comment>
<comment type="subcellular location">
    <subcellularLocation>
        <location evidence="1">Cytoplasm</location>
    </subcellularLocation>
</comment>
<comment type="domain">
    <text evidence="1">The N-terminal domain has the RNA-binding Sm fold. It harbors the endoribonuclease activity.</text>
</comment>
<comment type="similarity">
    <text evidence="1">Belongs to the eukaryotic release factor 1 family. Pelota subfamily.</text>
</comment>
<keyword id="KW-0002">3D-structure</keyword>
<keyword id="KW-0963">Cytoplasm</keyword>
<keyword id="KW-0255">Endonuclease</keyword>
<keyword id="KW-0378">Hydrolase</keyword>
<keyword id="KW-0479">Metal-binding</keyword>
<keyword id="KW-0540">Nuclease</keyword>
<keyword id="KW-1185">Reference proteome</keyword>
<reference key="1">
    <citation type="journal article" date="1999" name="DNA Res.">
        <title>Complete genome sequence of an aerobic hyper-thermophilic crenarchaeon, Aeropyrum pernix K1.</title>
        <authorList>
            <person name="Kawarabayasi Y."/>
            <person name="Hino Y."/>
            <person name="Horikawa H."/>
            <person name="Yamazaki S."/>
            <person name="Haikawa Y."/>
            <person name="Jin-no K."/>
            <person name="Takahashi M."/>
            <person name="Sekine M."/>
            <person name="Baba S."/>
            <person name="Ankai A."/>
            <person name="Kosugi H."/>
            <person name="Hosoyama A."/>
            <person name="Fukui S."/>
            <person name="Nagai Y."/>
            <person name="Nishijima K."/>
            <person name="Nakazawa H."/>
            <person name="Takamiya M."/>
            <person name="Masuda S."/>
            <person name="Funahashi T."/>
            <person name="Tanaka T."/>
            <person name="Kudoh Y."/>
            <person name="Yamazaki J."/>
            <person name="Kushida N."/>
            <person name="Oguchi A."/>
            <person name="Aoki K."/>
            <person name="Kubota K."/>
            <person name="Nakamura Y."/>
            <person name="Nomura N."/>
            <person name="Sako Y."/>
            <person name="Kikuchi H."/>
        </authorList>
    </citation>
    <scope>NUCLEOTIDE SEQUENCE [LARGE SCALE GENOMIC DNA]</scope>
    <source>
        <strain>ATCC 700893 / DSM 11879 / JCM 9820 / NBRC 100138 / K1</strain>
    </source>
</reference>